<reference key="1">
    <citation type="submission" date="2006-12" db="EMBL/GenBank/DDBJ databases">
        <title>Complete sequence of Shewanella sp. W3-18-1.</title>
        <authorList>
            <consortium name="US DOE Joint Genome Institute"/>
            <person name="Copeland A."/>
            <person name="Lucas S."/>
            <person name="Lapidus A."/>
            <person name="Barry K."/>
            <person name="Detter J.C."/>
            <person name="Glavina del Rio T."/>
            <person name="Hammon N."/>
            <person name="Israni S."/>
            <person name="Dalin E."/>
            <person name="Tice H."/>
            <person name="Pitluck S."/>
            <person name="Chain P."/>
            <person name="Malfatti S."/>
            <person name="Shin M."/>
            <person name="Vergez L."/>
            <person name="Schmutz J."/>
            <person name="Larimer F."/>
            <person name="Land M."/>
            <person name="Hauser L."/>
            <person name="Kyrpides N."/>
            <person name="Lykidis A."/>
            <person name="Tiedje J."/>
            <person name="Richardson P."/>
        </authorList>
    </citation>
    <scope>NUCLEOTIDE SEQUENCE [LARGE SCALE GENOMIC DNA]</scope>
    <source>
        <strain>W3-18-1</strain>
    </source>
</reference>
<organism>
    <name type="scientific">Shewanella sp. (strain W3-18-1)</name>
    <dbReference type="NCBI Taxonomy" id="351745"/>
    <lineage>
        <taxon>Bacteria</taxon>
        <taxon>Pseudomonadati</taxon>
        <taxon>Pseudomonadota</taxon>
        <taxon>Gammaproteobacteria</taxon>
        <taxon>Alteromonadales</taxon>
        <taxon>Shewanellaceae</taxon>
        <taxon>Shewanella</taxon>
    </lineage>
</organism>
<sequence length="408" mass="43946">MSWDQVWIDVNLATMDPSVSAPYGAITNAAIAVKDGKIAWLGPRSELPAFDVLSIPVYRGKGGWITPGLIDAHTHLIFAGNRANEFELRLQGASYEDIARADGGIISTVKACREADEAELFELGRQRLNALAKEGVTTVEIKSGYGLDTETELKILRVARELGKHHHVDVKTTFLGAHAIPPEYKDNSDGYVDLIINKMLPAVIAENLADAVDVFCENIAFNLEQTERVLSAAKAAGLEIKLHAEQLTNMGGSALAARLGAKSVDHIEYLDEAGVKALSESGTCAVLLPGAFYFLRETQKPPIDLLRQYGVPMVLASDFNPGSSPICSTLLMLNMGCTLFRLTPEEALTGLTLNAAKALGIEDNVGSLVVGKQADFCLWDIATPAQLAYSYGVNPCKDVVKNGKLVHQ</sequence>
<name>HUTI_SHESW</name>
<accession>A1RQ59</accession>
<proteinExistence type="inferred from homology"/>
<evidence type="ECO:0000255" key="1">
    <source>
        <dbReference type="HAMAP-Rule" id="MF_00372"/>
    </source>
</evidence>
<feature type="chain" id="PRO_0000306514" description="Imidazolonepropionase">
    <location>
        <begin position="1"/>
        <end position="408"/>
    </location>
</feature>
<feature type="binding site" evidence="1">
    <location>
        <position position="73"/>
    </location>
    <ligand>
        <name>Fe(3+)</name>
        <dbReference type="ChEBI" id="CHEBI:29034"/>
    </ligand>
</feature>
<feature type="binding site" evidence="1">
    <location>
        <position position="73"/>
    </location>
    <ligand>
        <name>Zn(2+)</name>
        <dbReference type="ChEBI" id="CHEBI:29105"/>
    </ligand>
</feature>
<feature type="binding site" evidence="1">
    <location>
        <position position="75"/>
    </location>
    <ligand>
        <name>Fe(3+)</name>
        <dbReference type="ChEBI" id="CHEBI:29034"/>
    </ligand>
</feature>
<feature type="binding site" evidence="1">
    <location>
        <position position="75"/>
    </location>
    <ligand>
        <name>Zn(2+)</name>
        <dbReference type="ChEBI" id="CHEBI:29105"/>
    </ligand>
</feature>
<feature type="binding site" evidence="1">
    <location>
        <position position="82"/>
    </location>
    <ligand>
        <name>4-imidazolone-5-propanoate</name>
        <dbReference type="ChEBI" id="CHEBI:77893"/>
    </ligand>
</feature>
<feature type="binding site" evidence="1">
    <location>
        <position position="145"/>
    </location>
    <ligand>
        <name>4-imidazolone-5-propanoate</name>
        <dbReference type="ChEBI" id="CHEBI:77893"/>
    </ligand>
</feature>
<feature type="binding site" evidence="1">
    <location>
        <position position="145"/>
    </location>
    <ligand>
        <name>N-formimidoyl-L-glutamate</name>
        <dbReference type="ChEBI" id="CHEBI:58928"/>
    </ligand>
</feature>
<feature type="binding site" evidence="1">
    <location>
        <position position="178"/>
    </location>
    <ligand>
        <name>4-imidazolone-5-propanoate</name>
        <dbReference type="ChEBI" id="CHEBI:77893"/>
    </ligand>
</feature>
<feature type="binding site" evidence="1">
    <location>
        <position position="243"/>
    </location>
    <ligand>
        <name>Fe(3+)</name>
        <dbReference type="ChEBI" id="CHEBI:29034"/>
    </ligand>
</feature>
<feature type="binding site" evidence="1">
    <location>
        <position position="243"/>
    </location>
    <ligand>
        <name>Zn(2+)</name>
        <dbReference type="ChEBI" id="CHEBI:29105"/>
    </ligand>
</feature>
<feature type="binding site" evidence="1">
    <location>
        <position position="246"/>
    </location>
    <ligand>
        <name>4-imidazolone-5-propanoate</name>
        <dbReference type="ChEBI" id="CHEBI:77893"/>
    </ligand>
</feature>
<feature type="binding site" evidence="1">
    <location>
        <position position="318"/>
    </location>
    <ligand>
        <name>Fe(3+)</name>
        <dbReference type="ChEBI" id="CHEBI:29034"/>
    </ligand>
</feature>
<feature type="binding site" evidence="1">
    <location>
        <position position="318"/>
    </location>
    <ligand>
        <name>Zn(2+)</name>
        <dbReference type="ChEBI" id="CHEBI:29105"/>
    </ligand>
</feature>
<feature type="binding site" evidence="1">
    <location>
        <position position="320"/>
    </location>
    <ligand>
        <name>N-formimidoyl-L-glutamate</name>
        <dbReference type="ChEBI" id="CHEBI:58928"/>
    </ligand>
</feature>
<feature type="binding site" evidence="1">
    <location>
        <position position="322"/>
    </location>
    <ligand>
        <name>N-formimidoyl-L-glutamate</name>
        <dbReference type="ChEBI" id="CHEBI:58928"/>
    </ligand>
</feature>
<feature type="binding site" evidence="1">
    <location>
        <position position="323"/>
    </location>
    <ligand>
        <name>4-imidazolone-5-propanoate</name>
        <dbReference type="ChEBI" id="CHEBI:77893"/>
    </ligand>
</feature>
<gene>
    <name evidence="1" type="primary">hutI</name>
    <name type="ordered locus">Sputw3181_4000</name>
</gene>
<comment type="function">
    <text evidence="1">Catalyzes the hydrolytic cleavage of the carbon-nitrogen bond in imidazolone-5-propanoate to yield N-formimidoyl-L-glutamate. It is the third step in the universal histidine degradation pathway.</text>
</comment>
<comment type="catalytic activity">
    <reaction evidence="1">
        <text>4-imidazolone-5-propanoate + H2O = N-formimidoyl-L-glutamate</text>
        <dbReference type="Rhea" id="RHEA:23660"/>
        <dbReference type="ChEBI" id="CHEBI:15377"/>
        <dbReference type="ChEBI" id="CHEBI:58928"/>
        <dbReference type="ChEBI" id="CHEBI:77893"/>
        <dbReference type="EC" id="3.5.2.7"/>
    </reaction>
</comment>
<comment type="cofactor">
    <cofactor evidence="1">
        <name>Zn(2+)</name>
        <dbReference type="ChEBI" id="CHEBI:29105"/>
    </cofactor>
    <cofactor evidence="1">
        <name>Fe(3+)</name>
        <dbReference type="ChEBI" id="CHEBI:29034"/>
    </cofactor>
    <text evidence="1">Binds 1 zinc or iron ion per subunit.</text>
</comment>
<comment type="pathway">
    <text evidence="1">Amino-acid degradation; L-histidine degradation into L-glutamate; N-formimidoyl-L-glutamate from L-histidine: step 3/3.</text>
</comment>
<comment type="subcellular location">
    <subcellularLocation>
        <location evidence="1">Cytoplasm</location>
    </subcellularLocation>
</comment>
<comment type="similarity">
    <text evidence="1">Belongs to the metallo-dependent hydrolases superfamily. HutI family.</text>
</comment>
<protein>
    <recommendedName>
        <fullName evidence="1">Imidazolonepropionase</fullName>
        <ecNumber evidence="1">3.5.2.7</ecNumber>
    </recommendedName>
    <alternativeName>
        <fullName evidence="1">Imidazolone-5-propionate hydrolase</fullName>
    </alternativeName>
</protein>
<keyword id="KW-0963">Cytoplasm</keyword>
<keyword id="KW-0369">Histidine metabolism</keyword>
<keyword id="KW-0378">Hydrolase</keyword>
<keyword id="KW-0408">Iron</keyword>
<keyword id="KW-0479">Metal-binding</keyword>
<keyword id="KW-0862">Zinc</keyword>
<dbReference type="EC" id="3.5.2.7" evidence="1"/>
<dbReference type="EMBL" id="CP000503">
    <property type="protein sequence ID" value="ABM26804.1"/>
    <property type="molecule type" value="Genomic_DNA"/>
</dbReference>
<dbReference type="RefSeq" id="WP_011791226.1">
    <property type="nucleotide sequence ID" value="NC_008750.1"/>
</dbReference>
<dbReference type="SMR" id="A1RQ59"/>
<dbReference type="KEGG" id="shw:Sputw3181_4000"/>
<dbReference type="HOGENOM" id="CLU_041647_0_0_6"/>
<dbReference type="UniPathway" id="UPA00379">
    <property type="reaction ID" value="UER00551"/>
</dbReference>
<dbReference type="Proteomes" id="UP000002597">
    <property type="component" value="Chromosome"/>
</dbReference>
<dbReference type="GO" id="GO:0005737">
    <property type="term" value="C:cytoplasm"/>
    <property type="evidence" value="ECO:0007669"/>
    <property type="project" value="UniProtKB-SubCell"/>
</dbReference>
<dbReference type="GO" id="GO:0050480">
    <property type="term" value="F:imidazolonepropionase activity"/>
    <property type="evidence" value="ECO:0007669"/>
    <property type="project" value="UniProtKB-UniRule"/>
</dbReference>
<dbReference type="GO" id="GO:0005506">
    <property type="term" value="F:iron ion binding"/>
    <property type="evidence" value="ECO:0007669"/>
    <property type="project" value="UniProtKB-UniRule"/>
</dbReference>
<dbReference type="GO" id="GO:0008270">
    <property type="term" value="F:zinc ion binding"/>
    <property type="evidence" value="ECO:0007669"/>
    <property type="project" value="UniProtKB-UniRule"/>
</dbReference>
<dbReference type="GO" id="GO:0019556">
    <property type="term" value="P:L-histidine catabolic process to glutamate and formamide"/>
    <property type="evidence" value="ECO:0007669"/>
    <property type="project" value="UniProtKB-UniPathway"/>
</dbReference>
<dbReference type="GO" id="GO:0019557">
    <property type="term" value="P:L-histidine catabolic process to glutamate and formate"/>
    <property type="evidence" value="ECO:0007669"/>
    <property type="project" value="UniProtKB-UniPathway"/>
</dbReference>
<dbReference type="CDD" id="cd01296">
    <property type="entry name" value="Imidazolone-5PH"/>
    <property type="match status" value="1"/>
</dbReference>
<dbReference type="FunFam" id="3.20.20.140:FF:000007">
    <property type="entry name" value="Imidazolonepropionase"/>
    <property type="match status" value="1"/>
</dbReference>
<dbReference type="Gene3D" id="3.20.20.140">
    <property type="entry name" value="Metal-dependent hydrolases"/>
    <property type="match status" value="1"/>
</dbReference>
<dbReference type="Gene3D" id="2.30.40.10">
    <property type="entry name" value="Urease, subunit C, domain 1"/>
    <property type="match status" value="1"/>
</dbReference>
<dbReference type="HAMAP" id="MF_00372">
    <property type="entry name" value="HutI"/>
    <property type="match status" value="1"/>
</dbReference>
<dbReference type="InterPro" id="IPR006680">
    <property type="entry name" value="Amidohydro-rel"/>
</dbReference>
<dbReference type="InterPro" id="IPR005920">
    <property type="entry name" value="HutI"/>
</dbReference>
<dbReference type="InterPro" id="IPR011059">
    <property type="entry name" value="Metal-dep_hydrolase_composite"/>
</dbReference>
<dbReference type="InterPro" id="IPR032466">
    <property type="entry name" value="Metal_Hydrolase"/>
</dbReference>
<dbReference type="NCBIfam" id="TIGR01224">
    <property type="entry name" value="hutI"/>
    <property type="match status" value="1"/>
</dbReference>
<dbReference type="PANTHER" id="PTHR42752">
    <property type="entry name" value="IMIDAZOLONEPROPIONASE"/>
    <property type="match status" value="1"/>
</dbReference>
<dbReference type="PANTHER" id="PTHR42752:SF1">
    <property type="entry name" value="IMIDAZOLONEPROPIONASE-RELATED"/>
    <property type="match status" value="1"/>
</dbReference>
<dbReference type="Pfam" id="PF01979">
    <property type="entry name" value="Amidohydro_1"/>
    <property type="match status" value="1"/>
</dbReference>
<dbReference type="SUPFAM" id="SSF51338">
    <property type="entry name" value="Composite domain of metallo-dependent hydrolases"/>
    <property type="match status" value="1"/>
</dbReference>
<dbReference type="SUPFAM" id="SSF51556">
    <property type="entry name" value="Metallo-dependent hydrolases"/>
    <property type="match status" value="1"/>
</dbReference>